<evidence type="ECO:0000255" key="1">
    <source>
        <dbReference type="HAMAP-Rule" id="MF_00672"/>
    </source>
</evidence>
<reference key="1">
    <citation type="journal article" date="2009" name="Stand. Genomic Sci.">
        <title>Complete genome sequence of Kangiella koreensis type strain (SW-125).</title>
        <authorList>
            <person name="Han C."/>
            <person name="Sikorski J."/>
            <person name="Lapidus A."/>
            <person name="Nolan M."/>
            <person name="Glavina Del Rio T."/>
            <person name="Tice H."/>
            <person name="Cheng J.F."/>
            <person name="Lucas S."/>
            <person name="Chen F."/>
            <person name="Copeland A."/>
            <person name="Ivanova N."/>
            <person name="Mavromatis K."/>
            <person name="Ovchinnikova G."/>
            <person name="Pati A."/>
            <person name="Bruce D."/>
            <person name="Goodwin L."/>
            <person name="Pitluck S."/>
            <person name="Chen A."/>
            <person name="Palaniappan K."/>
            <person name="Land M."/>
            <person name="Hauser L."/>
            <person name="Chang Y.J."/>
            <person name="Jeffries C.D."/>
            <person name="Chain P."/>
            <person name="Saunders E."/>
            <person name="Brettin T."/>
            <person name="Goker M."/>
            <person name="Tindall B.J."/>
            <person name="Bristow J."/>
            <person name="Eisen J.A."/>
            <person name="Markowitz V."/>
            <person name="Hugenholtz P."/>
            <person name="Kyrpides N.C."/>
            <person name="Klenk H.P."/>
            <person name="Detter J.C."/>
        </authorList>
    </citation>
    <scope>NUCLEOTIDE SEQUENCE [LARGE SCALE GENOMIC DNA]</scope>
    <source>
        <strain>DSM 16069 / JCM 12317 / KCTC 12182 / SW-125</strain>
    </source>
</reference>
<name>Y1635_KANKD</name>
<keyword id="KW-0997">Cell inner membrane</keyword>
<keyword id="KW-1003">Cell membrane</keyword>
<keyword id="KW-0472">Membrane</keyword>
<keyword id="KW-1185">Reference proteome</keyword>
<keyword id="KW-0812">Transmembrane</keyword>
<keyword id="KW-1133">Transmembrane helix</keyword>
<organism>
    <name type="scientific">Kangiella koreensis (strain DSM 16069 / JCM 12317 / KCTC 12182 / SW-125)</name>
    <dbReference type="NCBI Taxonomy" id="523791"/>
    <lineage>
        <taxon>Bacteria</taxon>
        <taxon>Pseudomonadati</taxon>
        <taxon>Pseudomonadota</taxon>
        <taxon>Gammaproteobacteria</taxon>
        <taxon>Kangiellales</taxon>
        <taxon>Kangiellaceae</taxon>
        <taxon>Kangiella</taxon>
    </lineage>
</organism>
<accession>C7RCQ5</accession>
<proteinExistence type="inferred from homology"/>
<protein>
    <recommendedName>
        <fullName evidence="1">UPF0761 membrane protein Kkor_1635</fullName>
    </recommendedName>
</protein>
<dbReference type="EMBL" id="CP001707">
    <property type="protein sequence ID" value="ACV27047.1"/>
    <property type="molecule type" value="Genomic_DNA"/>
</dbReference>
<dbReference type="RefSeq" id="WP_015780653.1">
    <property type="nucleotide sequence ID" value="NC_013166.1"/>
</dbReference>
<dbReference type="SMR" id="C7RCQ5"/>
<dbReference type="FunCoup" id="C7RCQ5">
    <property type="interactions" value="122"/>
</dbReference>
<dbReference type="STRING" id="523791.Kkor_1635"/>
<dbReference type="KEGG" id="kko:Kkor_1635"/>
<dbReference type="eggNOG" id="COG1295">
    <property type="taxonomic scope" value="Bacteria"/>
</dbReference>
<dbReference type="HOGENOM" id="CLU_032288_1_0_6"/>
<dbReference type="InParanoid" id="C7RCQ5"/>
<dbReference type="OrthoDB" id="9808671at2"/>
<dbReference type="Proteomes" id="UP000001231">
    <property type="component" value="Chromosome"/>
</dbReference>
<dbReference type="GO" id="GO:0005886">
    <property type="term" value="C:plasma membrane"/>
    <property type="evidence" value="ECO:0007669"/>
    <property type="project" value="UniProtKB-SubCell"/>
</dbReference>
<dbReference type="HAMAP" id="MF_00672">
    <property type="entry name" value="UPF0761"/>
    <property type="match status" value="1"/>
</dbReference>
<dbReference type="InterPro" id="IPR023679">
    <property type="entry name" value="UPF0761_bac"/>
</dbReference>
<dbReference type="InterPro" id="IPR017039">
    <property type="entry name" value="Virul_fac_BrkB"/>
</dbReference>
<dbReference type="NCBIfam" id="TIGR00765">
    <property type="entry name" value="yihY_not_rbn"/>
    <property type="match status" value="1"/>
</dbReference>
<dbReference type="PANTHER" id="PTHR30213">
    <property type="entry name" value="INNER MEMBRANE PROTEIN YHJD"/>
    <property type="match status" value="1"/>
</dbReference>
<dbReference type="PANTHER" id="PTHR30213:SF0">
    <property type="entry name" value="UPF0761 MEMBRANE PROTEIN YIHY"/>
    <property type="match status" value="1"/>
</dbReference>
<dbReference type="Pfam" id="PF03631">
    <property type="entry name" value="Virul_fac_BrkB"/>
    <property type="match status" value="1"/>
</dbReference>
<feature type="chain" id="PRO_0000391036" description="UPF0761 membrane protein Kkor_1635">
    <location>
        <begin position="1"/>
        <end position="397"/>
    </location>
</feature>
<feature type="transmembrane region" description="Helical" evidence="1">
    <location>
        <begin position="36"/>
        <end position="56"/>
    </location>
</feature>
<feature type="transmembrane region" description="Helical" evidence="1">
    <location>
        <begin position="92"/>
        <end position="112"/>
    </location>
</feature>
<feature type="transmembrane region" description="Helical" evidence="1">
    <location>
        <begin position="132"/>
        <end position="152"/>
    </location>
</feature>
<feature type="transmembrane region" description="Helical" evidence="1">
    <location>
        <begin position="168"/>
        <end position="188"/>
    </location>
</feature>
<feature type="transmembrane region" description="Helical" evidence="1">
    <location>
        <begin position="201"/>
        <end position="221"/>
    </location>
</feature>
<feature type="transmembrane region" description="Helical" evidence="1">
    <location>
        <begin position="237"/>
        <end position="257"/>
    </location>
</feature>
<comment type="subcellular location">
    <subcellularLocation>
        <location evidence="1">Cell inner membrane</location>
        <topology evidence="1">Multi-pass membrane protein</topology>
    </subcellularLocation>
</comment>
<comment type="similarity">
    <text evidence="1">Belongs to the UPF0761 family.</text>
</comment>
<sequence length="397" mass="44880">MEKRWKWLKAFIKFVFIQFNQKQTSAMAAELTLSNMLALVPLMTVAVSLMAVFPSFEGVNTQVQALIFDNLMPETGLAVQEHLNEYVSKSKNLSAIGLGFLIVTSLLLMRSIDRSINALWETPTQRKGIHKILAYWAMLTMAPILIAASLAASSYFATLPIVSDLSGILTFGLPFILIVLAFSALYMVVPYTQVRFYKALIAAVITAILFEAAKYGFAIFVTKFSSYELIYGAITAIPIFFLWVYLSWSILLLGVIVCFGLHRFEVESEKHEHEFISVLKILQFFIQAQDKESSLSLEQLKSKFSYLHEQTLRGYLEQLLRLNFLAKLEGEQYCLKLTGHSLTIEEVYRRGNWRLPNNNQALSDEKNDSFSTPIEQANLEMAKALDVELVSTNSVNS</sequence>
<gene>
    <name type="ordered locus">Kkor_1635</name>
</gene>